<dbReference type="EC" id="2.4.2.9" evidence="1"/>
<dbReference type="EMBL" id="BA000016">
    <property type="protein sequence ID" value="BAB81903.1"/>
    <property type="molecule type" value="Genomic_DNA"/>
</dbReference>
<dbReference type="RefSeq" id="WP_003452430.1">
    <property type="nucleotide sequence ID" value="NC_003366.1"/>
</dbReference>
<dbReference type="SMR" id="Q8XIC4"/>
<dbReference type="STRING" id="195102.gene:10491476"/>
<dbReference type="GeneID" id="93001260"/>
<dbReference type="KEGG" id="cpe:CPE2197"/>
<dbReference type="HOGENOM" id="CLU_067096_2_2_9"/>
<dbReference type="UniPathway" id="UPA00574">
    <property type="reaction ID" value="UER00636"/>
</dbReference>
<dbReference type="Proteomes" id="UP000000818">
    <property type="component" value="Chromosome"/>
</dbReference>
<dbReference type="GO" id="GO:0005525">
    <property type="term" value="F:GTP binding"/>
    <property type="evidence" value="ECO:0007669"/>
    <property type="project" value="UniProtKB-KW"/>
</dbReference>
<dbReference type="GO" id="GO:0000287">
    <property type="term" value="F:magnesium ion binding"/>
    <property type="evidence" value="ECO:0007669"/>
    <property type="project" value="UniProtKB-UniRule"/>
</dbReference>
<dbReference type="GO" id="GO:0004845">
    <property type="term" value="F:uracil phosphoribosyltransferase activity"/>
    <property type="evidence" value="ECO:0007669"/>
    <property type="project" value="UniProtKB-UniRule"/>
</dbReference>
<dbReference type="GO" id="GO:0044206">
    <property type="term" value="P:UMP salvage"/>
    <property type="evidence" value="ECO:0007669"/>
    <property type="project" value="UniProtKB-UniRule"/>
</dbReference>
<dbReference type="GO" id="GO:0006223">
    <property type="term" value="P:uracil salvage"/>
    <property type="evidence" value="ECO:0007669"/>
    <property type="project" value="InterPro"/>
</dbReference>
<dbReference type="CDD" id="cd06223">
    <property type="entry name" value="PRTases_typeI"/>
    <property type="match status" value="1"/>
</dbReference>
<dbReference type="FunFam" id="3.40.50.2020:FF:000003">
    <property type="entry name" value="Uracil phosphoribosyltransferase"/>
    <property type="match status" value="1"/>
</dbReference>
<dbReference type="Gene3D" id="3.40.50.2020">
    <property type="match status" value="1"/>
</dbReference>
<dbReference type="HAMAP" id="MF_01218_B">
    <property type="entry name" value="Upp_B"/>
    <property type="match status" value="1"/>
</dbReference>
<dbReference type="InterPro" id="IPR000836">
    <property type="entry name" value="PRibTrfase_dom"/>
</dbReference>
<dbReference type="InterPro" id="IPR029057">
    <property type="entry name" value="PRTase-like"/>
</dbReference>
<dbReference type="InterPro" id="IPR034332">
    <property type="entry name" value="Upp_B"/>
</dbReference>
<dbReference type="InterPro" id="IPR050054">
    <property type="entry name" value="UPRTase/APRTase"/>
</dbReference>
<dbReference type="InterPro" id="IPR005765">
    <property type="entry name" value="Ura_phspho_trans"/>
</dbReference>
<dbReference type="NCBIfam" id="NF001097">
    <property type="entry name" value="PRK00129.1"/>
    <property type="match status" value="1"/>
</dbReference>
<dbReference type="NCBIfam" id="TIGR01091">
    <property type="entry name" value="upp"/>
    <property type="match status" value="1"/>
</dbReference>
<dbReference type="PANTHER" id="PTHR32315">
    <property type="entry name" value="ADENINE PHOSPHORIBOSYLTRANSFERASE"/>
    <property type="match status" value="1"/>
</dbReference>
<dbReference type="PANTHER" id="PTHR32315:SF4">
    <property type="entry name" value="URACIL PHOSPHORIBOSYLTRANSFERASE, CHLOROPLASTIC"/>
    <property type="match status" value="1"/>
</dbReference>
<dbReference type="Pfam" id="PF14681">
    <property type="entry name" value="UPRTase"/>
    <property type="match status" value="1"/>
</dbReference>
<dbReference type="SUPFAM" id="SSF53271">
    <property type="entry name" value="PRTase-like"/>
    <property type="match status" value="1"/>
</dbReference>
<gene>
    <name evidence="1" type="primary">upp</name>
    <name type="ordered locus">CPE2197</name>
</gene>
<name>UPP_CLOPE</name>
<feature type="chain" id="PRO_0000120816" description="Uracil phosphoribosyltransferase">
    <location>
        <begin position="1"/>
        <end position="209"/>
    </location>
</feature>
<feature type="binding site" evidence="1">
    <location>
        <position position="79"/>
    </location>
    <ligand>
        <name>5-phospho-alpha-D-ribose 1-diphosphate</name>
        <dbReference type="ChEBI" id="CHEBI:58017"/>
    </ligand>
</feature>
<feature type="binding site" evidence="1">
    <location>
        <position position="104"/>
    </location>
    <ligand>
        <name>5-phospho-alpha-D-ribose 1-diphosphate</name>
        <dbReference type="ChEBI" id="CHEBI:58017"/>
    </ligand>
</feature>
<feature type="binding site" evidence="1">
    <location>
        <begin position="131"/>
        <end position="139"/>
    </location>
    <ligand>
        <name>5-phospho-alpha-D-ribose 1-diphosphate</name>
        <dbReference type="ChEBI" id="CHEBI:58017"/>
    </ligand>
</feature>
<feature type="binding site" evidence="1">
    <location>
        <position position="194"/>
    </location>
    <ligand>
        <name>uracil</name>
        <dbReference type="ChEBI" id="CHEBI:17568"/>
    </ligand>
</feature>
<feature type="binding site" evidence="1">
    <location>
        <begin position="199"/>
        <end position="201"/>
    </location>
    <ligand>
        <name>uracil</name>
        <dbReference type="ChEBI" id="CHEBI:17568"/>
    </ligand>
</feature>
<feature type="binding site" evidence="1">
    <location>
        <position position="200"/>
    </location>
    <ligand>
        <name>5-phospho-alpha-D-ribose 1-diphosphate</name>
        <dbReference type="ChEBI" id="CHEBI:58017"/>
    </ligand>
</feature>
<organism>
    <name type="scientific">Clostridium perfringens (strain 13 / Type A)</name>
    <dbReference type="NCBI Taxonomy" id="195102"/>
    <lineage>
        <taxon>Bacteria</taxon>
        <taxon>Bacillati</taxon>
        <taxon>Bacillota</taxon>
        <taxon>Clostridia</taxon>
        <taxon>Eubacteriales</taxon>
        <taxon>Clostridiaceae</taxon>
        <taxon>Clostridium</taxon>
    </lineage>
</organism>
<reference key="1">
    <citation type="journal article" date="2002" name="Proc. Natl. Acad. Sci. U.S.A.">
        <title>Complete genome sequence of Clostridium perfringens, an anaerobic flesh-eater.</title>
        <authorList>
            <person name="Shimizu T."/>
            <person name="Ohtani K."/>
            <person name="Hirakawa H."/>
            <person name="Ohshima K."/>
            <person name="Yamashita A."/>
            <person name="Shiba T."/>
            <person name="Ogasawara N."/>
            <person name="Hattori M."/>
            <person name="Kuhara S."/>
            <person name="Hayashi H."/>
        </authorList>
    </citation>
    <scope>NUCLEOTIDE SEQUENCE [LARGE SCALE GENOMIC DNA]</scope>
    <source>
        <strain>13 / Type A</strain>
    </source>
</reference>
<keyword id="KW-0021">Allosteric enzyme</keyword>
<keyword id="KW-0328">Glycosyltransferase</keyword>
<keyword id="KW-0342">GTP-binding</keyword>
<keyword id="KW-0460">Magnesium</keyword>
<keyword id="KW-0547">Nucleotide-binding</keyword>
<keyword id="KW-1185">Reference proteome</keyword>
<keyword id="KW-0808">Transferase</keyword>
<evidence type="ECO:0000255" key="1">
    <source>
        <dbReference type="HAMAP-Rule" id="MF_01218"/>
    </source>
</evidence>
<protein>
    <recommendedName>
        <fullName evidence="1">Uracil phosphoribosyltransferase</fullName>
        <ecNumber evidence="1">2.4.2.9</ecNumber>
    </recommendedName>
    <alternativeName>
        <fullName evidence="1">UMP pyrophosphorylase</fullName>
    </alternativeName>
    <alternativeName>
        <fullName evidence="1">UPRTase</fullName>
    </alternativeName>
</protein>
<proteinExistence type="inferred from homology"/>
<sequence length="209" mass="22986">MSKVTEITHPLILHKLAFIRDKNTGSKDFRELVSEVSMLMAYEVTRNLPMEEIEIETPVCKTKCKVLAGKKVAIVPILRAGLGMVDGMLQLIPAAKVGHIGLYRDEETLQPVEYFCKLPQDIAERDVIVVDPMLATGGSAADAITLLKKRGAKQIRLMCLISSPEGIEFVQKAHPDVDIYVACIDEKLNDHGYIVPGLGDAGDRLFGTK</sequence>
<comment type="function">
    <text evidence="1">Catalyzes the conversion of uracil and 5-phospho-alpha-D-ribose 1-diphosphate (PRPP) to UMP and diphosphate.</text>
</comment>
<comment type="catalytic activity">
    <reaction evidence="1">
        <text>UMP + diphosphate = 5-phospho-alpha-D-ribose 1-diphosphate + uracil</text>
        <dbReference type="Rhea" id="RHEA:13017"/>
        <dbReference type="ChEBI" id="CHEBI:17568"/>
        <dbReference type="ChEBI" id="CHEBI:33019"/>
        <dbReference type="ChEBI" id="CHEBI:57865"/>
        <dbReference type="ChEBI" id="CHEBI:58017"/>
        <dbReference type="EC" id="2.4.2.9"/>
    </reaction>
</comment>
<comment type="cofactor">
    <cofactor evidence="1">
        <name>Mg(2+)</name>
        <dbReference type="ChEBI" id="CHEBI:18420"/>
    </cofactor>
    <text evidence="1">Binds 1 Mg(2+) ion per subunit. The magnesium is bound as Mg-PRPP.</text>
</comment>
<comment type="activity regulation">
    <text evidence="1">Allosterically activated by GTP.</text>
</comment>
<comment type="pathway">
    <text evidence="1">Pyrimidine metabolism; UMP biosynthesis via salvage pathway; UMP from uracil: step 1/1.</text>
</comment>
<comment type="similarity">
    <text evidence="1">Belongs to the UPRTase family.</text>
</comment>
<accession>Q8XIC4</accession>